<protein>
    <recommendedName>
        <fullName evidence="1">GTP cyclohydrolase 1</fullName>
        <ecNumber evidence="1">3.5.4.16</ecNumber>
    </recommendedName>
    <alternativeName>
        <fullName evidence="1">GTP cyclohydrolase I</fullName>
        <shortName evidence="1">GTP-CH-I</shortName>
    </alternativeName>
</protein>
<dbReference type="EC" id="3.5.4.16" evidence="1"/>
<dbReference type="EMBL" id="CP000685">
    <property type="protein sequence ID" value="ABQ05297.1"/>
    <property type="molecule type" value="Genomic_DNA"/>
</dbReference>
<dbReference type="RefSeq" id="WP_012024336.1">
    <property type="nucleotide sequence ID" value="NZ_MUGZ01000028.1"/>
</dbReference>
<dbReference type="SMR" id="A5FHM7"/>
<dbReference type="STRING" id="376686.Fjoh_2270"/>
<dbReference type="KEGG" id="fjo:Fjoh_2270"/>
<dbReference type="eggNOG" id="COG0302">
    <property type="taxonomic scope" value="Bacteria"/>
</dbReference>
<dbReference type="HOGENOM" id="CLU_049768_3_2_10"/>
<dbReference type="OrthoDB" id="9801207at2"/>
<dbReference type="UniPathway" id="UPA00848">
    <property type="reaction ID" value="UER00151"/>
</dbReference>
<dbReference type="Proteomes" id="UP000006694">
    <property type="component" value="Chromosome"/>
</dbReference>
<dbReference type="GO" id="GO:0005737">
    <property type="term" value="C:cytoplasm"/>
    <property type="evidence" value="ECO:0007669"/>
    <property type="project" value="TreeGrafter"/>
</dbReference>
<dbReference type="GO" id="GO:0005525">
    <property type="term" value="F:GTP binding"/>
    <property type="evidence" value="ECO:0007669"/>
    <property type="project" value="UniProtKB-KW"/>
</dbReference>
<dbReference type="GO" id="GO:0003934">
    <property type="term" value="F:GTP cyclohydrolase I activity"/>
    <property type="evidence" value="ECO:0007669"/>
    <property type="project" value="UniProtKB-UniRule"/>
</dbReference>
<dbReference type="GO" id="GO:0008270">
    <property type="term" value="F:zinc ion binding"/>
    <property type="evidence" value="ECO:0007669"/>
    <property type="project" value="UniProtKB-UniRule"/>
</dbReference>
<dbReference type="GO" id="GO:0006730">
    <property type="term" value="P:one-carbon metabolic process"/>
    <property type="evidence" value="ECO:0007669"/>
    <property type="project" value="UniProtKB-UniRule"/>
</dbReference>
<dbReference type="GO" id="GO:0006729">
    <property type="term" value="P:tetrahydrobiopterin biosynthetic process"/>
    <property type="evidence" value="ECO:0007669"/>
    <property type="project" value="TreeGrafter"/>
</dbReference>
<dbReference type="GO" id="GO:0046654">
    <property type="term" value="P:tetrahydrofolate biosynthetic process"/>
    <property type="evidence" value="ECO:0007669"/>
    <property type="project" value="UniProtKB-UniRule"/>
</dbReference>
<dbReference type="FunFam" id="3.30.1130.10:FF:000001">
    <property type="entry name" value="GTP cyclohydrolase 1"/>
    <property type="match status" value="1"/>
</dbReference>
<dbReference type="Gene3D" id="1.10.286.10">
    <property type="match status" value="1"/>
</dbReference>
<dbReference type="Gene3D" id="3.30.1130.10">
    <property type="match status" value="1"/>
</dbReference>
<dbReference type="HAMAP" id="MF_00223">
    <property type="entry name" value="FolE"/>
    <property type="match status" value="1"/>
</dbReference>
<dbReference type="InterPro" id="IPR043133">
    <property type="entry name" value="GTP-CH-I_C/QueF"/>
</dbReference>
<dbReference type="InterPro" id="IPR043134">
    <property type="entry name" value="GTP-CH-I_N"/>
</dbReference>
<dbReference type="InterPro" id="IPR001474">
    <property type="entry name" value="GTP_CycHdrlase_I"/>
</dbReference>
<dbReference type="InterPro" id="IPR018234">
    <property type="entry name" value="GTP_CycHdrlase_I_CS"/>
</dbReference>
<dbReference type="InterPro" id="IPR020602">
    <property type="entry name" value="GTP_CycHdrlase_I_dom"/>
</dbReference>
<dbReference type="NCBIfam" id="TIGR00063">
    <property type="entry name" value="folE"/>
    <property type="match status" value="1"/>
</dbReference>
<dbReference type="NCBIfam" id="NF006824">
    <property type="entry name" value="PRK09347.1-1"/>
    <property type="match status" value="1"/>
</dbReference>
<dbReference type="NCBIfam" id="NF006825">
    <property type="entry name" value="PRK09347.1-2"/>
    <property type="match status" value="1"/>
</dbReference>
<dbReference type="NCBIfam" id="NF006826">
    <property type="entry name" value="PRK09347.1-3"/>
    <property type="match status" value="1"/>
</dbReference>
<dbReference type="PANTHER" id="PTHR11109:SF7">
    <property type="entry name" value="GTP CYCLOHYDROLASE 1"/>
    <property type="match status" value="1"/>
</dbReference>
<dbReference type="PANTHER" id="PTHR11109">
    <property type="entry name" value="GTP CYCLOHYDROLASE I"/>
    <property type="match status" value="1"/>
</dbReference>
<dbReference type="Pfam" id="PF01227">
    <property type="entry name" value="GTP_cyclohydroI"/>
    <property type="match status" value="1"/>
</dbReference>
<dbReference type="SUPFAM" id="SSF55620">
    <property type="entry name" value="Tetrahydrobiopterin biosynthesis enzymes-like"/>
    <property type="match status" value="1"/>
</dbReference>
<dbReference type="PROSITE" id="PS00859">
    <property type="entry name" value="GTP_CYCLOHYDROL_1_1"/>
    <property type="match status" value="1"/>
</dbReference>
<dbReference type="PROSITE" id="PS00860">
    <property type="entry name" value="GTP_CYCLOHYDROL_1_2"/>
    <property type="match status" value="1"/>
</dbReference>
<keyword id="KW-0342">GTP-binding</keyword>
<keyword id="KW-0378">Hydrolase</keyword>
<keyword id="KW-0479">Metal-binding</keyword>
<keyword id="KW-0547">Nucleotide-binding</keyword>
<keyword id="KW-0554">One-carbon metabolism</keyword>
<keyword id="KW-0862">Zinc</keyword>
<name>GCH1_FLAJ1</name>
<evidence type="ECO:0000255" key="1">
    <source>
        <dbReference type="HAMAP-Rule" id="MF_00223"/>
    </source>
</evidence>
<organism>
    <name type="scientific">Flavobacterium johnsoniae (strain ATCC 17061 / DSM 2064 / JCM 8514 / BCRC 14874 / CCUG 350202 / NBRC 14942 / NCIMB 11054 / UW101)</name>
    <name type="common">Cytophaga johnsonae</name>
    <dbReference type="NCBI Taxonomy" id="376686"/>
    <lineage>
        <taxon>Bacteria</taxon>
        <taxon>Pseudomonadati</taxon>
        <taxon>Bacteroidota</taxon>
        <taxon>Flavobacteriia</taxon>
        <taxon>Flavobacteriales</taxon>
        <taxon>Flavobacteriaceae</taxon>
        <taxon>Flavobacterium</taxon>
    </lineage>
</organism>
<comment type="catalytic activity">
    <reaction evidence="1">
        <text>GTP + H2O = 7,8-dihydroneopterin 3'-triphosphate + formate + H(+)</text>
        <dbReference type="Rhea" id="RHEA:17473"/>
        <dbReference type="ChEBI" id="CHEBI:15377"/>
        <dbReference type="ChEBI" id="CHEBI:15378"/>
        <dbReference type="ChEBI" id="CHEBI:15740"/>
        <dbReference type="ChEBI" id="CHEBI:37565"/>
        <dbReference type="ChEBI" id="CHEBI:58462"/>
        <dbReference type="EC" id="3.5.4.16"/>
    </reaction>
</comment>
<comment type="pathway">
    <text evidence="1">Cofactor biosynthesis; 7,8-dihydroneopterin triphosphate biosynthesis; 7,8-dihydroneopterin triphosphate from GTP: step 1/1.</text>
</comment>
<comment type="subunit">
    <text evidence="1">Homomer.</text>
</comment>
<comment type="similarity">
    <text evidence="1">Belongs to the GTP cyclohydrolase I family.</text>
</comment>
<feature type="chain" id="PRO_1000078142" description="GTP cyclohydrolase 1">
    <location>
        <begin position="1"/>
        <end position="223"/>
    </location>
</feature>
<feature type="binding site" evidence="1">
    <location>
        <position position="111"/>
    </location>
    <ligand>
        <name>Zn(2+)</name>
        <dbReference type="ChEBI" id="CHEBI:29105"/>
    </ligand>
</feature>
<feature type="binding site" evidence="1">
    <location>
        <position position="114"/>
    </location>
    <ligand>
        <name>Zn(2+)</name>
        <dbReference type="ChEBI" id="CHEBI:29105"/>
    </ligand>
</feature>
<feature type="binding site" evidence="1">
    <location>
        <position position="182"/>
    </location>
    <ligand>
        <name>Zn(2+)</name>
        <dbReference type="ChEBI" id="CHEBI:29105"/>
    </ligand>
</feature>
<proteinExistence type="inferred from homology"/>
<accession>A5FHM7</accession>
<gene>
    <name evidence="1" type="primary">folE</name>
    <name type="ordered locus">Fjoh_2270</name>
</gene>
<sequence>MINNEDFLDEIGDSHFSSNAKNPLREDAFDITDEEKIEKIKKDVENILQTLGMDLTDDSIKGTPNRVAKMFVKEIFGGLNPAKQPKASTFDNNYKYGEMLVEKNITVYSTCEHHLLPIIGRAHVAYISSGRVIGLSKMNRIVEYYAKRPQVQERLTMQIVQELQKALGTEDVACVIDAKHLCVNSRGIKDIESSTVTSEFGGKFKDPQTKREFLDYIKLDTQF</sequence>
<reference key="1">
    <citation type="journal article" date="2009" name="Appl. Environ. Microbiol.">
        <title>Novel features of the polysaccharide-digesting gliding bacterium Flavobacterium johnsoniae as revealed by genome sequence analysis.</title>
        <authorList>
            <person name="McBride M.J."/>
            <person name="Xie G."/>
            <person name="Martens E.C."/>
            <person name="Lapidus A."/>
            <person name="Henrissat B."/>
            <person name="Rhodes R.G."/>
            <person name="Goltsman E."/>
            <person name="Wang W."/>
            <person name="Xu J."/>
            <person name="Hunnicutt D.W."/>
            <person name="Staroscik A.M."/>
            <person name="Hoover T.R."/>
            <person name="Cheng Y.Q."/>
            <person name="Stein J.L."/>
        </authorList>
    </citation>
    <scope>NUCLEOTIDE SEQUENCE [LARGE SCALE GENOMIC DNA]</scope>
    <source>
        <strain>ATCC 17061 / DSM 2064 / JCM 8514 / BCRC 14874 / CCUG 350202 / NBRC 14942 / NCIMB 11054 / UW101</strain>
    </source>
</reference>